<feature type="propeptide" id="PRO_0000000712" description="Removed in mature form" evidence="1">
    <location>
        <begin position="1"/>
        <end position="2"/>
    </location>
</feature>
<feature type="chain" id="PRO_0000000713" description="Actin, adductor muscle">
    <location>
        <begin position="3"/>
        <end position="376"/>
    </location>
</feature>
<feature type="modified residue" description="N-acetylaspartate" evidence="1">
    <location>
        <position position="3"/>
    </location>
</feature>
<accession>Q26065</accession>
<organism>
    <name type="scientific">Placopecten magellanicus</name>
    <name type="common">Sea scallop</name>
    <dbReference type="NCBI Taxonomy" id="6577"/>
    <lineage>
        <taxon>Eukaryota</taxon>
        <taxon>Metazoa</taxon>
        <taxon>Spiralia</taxon>
        <taxon>Lophotrochozoa</taxon>
        <taxon>Mollusca</taxon>
        <taxon>Bivalvia</taxon>
        <taxon>Autobranchia</taxon>
        <taxon>Pteriomorphia</taxon>
        <taxon>Pectinida</taxon>
        <taxon>Pectinoidea</taxon>
        <taxon>Pectinidae</taxon>
        <taxon>Placopecten</taxon>
    </lineage>
</organism>
<reference key="1">
    <citation type="journal article" date="1996" name="J. Shellfish Res.">
        <title>Isolation and characterization of a cDNA encoding an actin gene from sea scallop (Placopecten magellanicus).</title>
        <authorList>
            <person name="Patwary M.U."/>
            <person name="Reith M."/>
            <person name="Kenchington E.L."/>
        </authorList>
    </citation>
    <scope>NUCLEOTIDE SEQUENCE [MRNA]</scope>
    <source>
        <tissue>Adductor muscle</tissue>
    </source>
</reference>
<proteinExistence type="evidence at transcript level"/>
<keyword id="KW-0007">Acetylation</keyword>
<keyword id="KW-0067">ATP-binding</keyword>
<keyword id="KW-0963">Cytoplasm</keyword>
<keyword id="KW-0206">Cytoskeleton</keyword>
<keyword id="KW-0378">Hydrolase</keyword>
<keyword id="KW-0514">Muscle protein</keyword>
<keyword id="KW-0547">Nucleotide-binding</keyword>
<evidence type="ECO:0000250" key="1"/>
<evidence type="ECO:0000250" key="2">
    <source>
        <dbReference type="UniProtKB" id="P68137"/>
    </source>
</evidence>
<evidence type="ECO:0000305" key="3"/>
<comment type="function">
    <text>Actins are highly conserved proteins that are involved in various types of cell motility and are ubiquitously expressed in all eukaryotic cells.</text>
</comment>
<comment type="catalytic activity">
    <reaction evidence="2">
        <text>ATP + H2O = ADP + phosphate + H(+)</text>
        <dbReference type="Rhea" id="RHEA:13065"/>
        <dbReference type="ChEBI" id="CHEBI:15377"/>
        <dbReference type="ChEBI" id="CHEBI:15378"/>
        <dbReference type="ChEBI" id="CHEBI:30616"/>
        <dbReference type="ChEBI" id="CHEBI:43474"/>
        <dbReference type="ChEBI" id="CHEBI:456216"/>
    </reaction>
</comment>
<comment type="subcellular location">
    <subcellularLocation>
        <location>Cytoplasm</location>
        <location>Cytoskeleton</location>
    </subcellularLocation>
</comment>
<comment type="miscellaneous">
    <text>There are at least 12 actin genes in P.magellanicus. Only one actin gene is expressed in the adductor muscle.</text>
</comment>
<comment type="similarity">
    <text evidence="3">Belongs to the actin family.</text>
</comment>
<name>ACT_PLAMG</name>
<dbReference type="EC" id="3.6.4.-" evidence="2"/>
<dbReference type="EMBL" id="U55046">
    <property type="protein sequence ID" value="AAB02227.1"/>
    <property type="molecule type" value="mRNA"/>
</dbReference>
<dbReference type="SMR" id="Q26065"/>
<dbReference type="GO" id="GO:0005737">
    <property type="term" value="C:cytoplasm"/>
    <property type="evidence" value="ECO:0007669"/>
    <property type="project" value="UniProtKB-KW"/>
</dbReference>
<dbReference type="GO" id="GO:0005856">
    <property type="term" value="C:cytoskeleton"/>
    <property type="evidence" value="ECO:0007669"/>
    <property type="project" value="UniProtKB-SubCell"/>
</dbReference>
<dbReference type="GO" id="GO:0005524">
    <property type="term" value="F:ATP binding"/>
    <property type="evidence" value="ECO:0007669"/>
    <property type="project" value="UniProtKB-KW"/>
</dbReference>
<dbReference type="GO" id="GO:0016787">
    <property type="term" value="F:hydrolase activity"/>
    <property type="evidence" value="ECO:0007669"/>
    <property type="project" value="UniProtKB-KW"/>
</dbReference>
<dbReference type="CDD" id="cd10224">
    <property type="entry name" value="ASKHA_NBD_actin"/>
    <property type="match status" value="1"/>
</dbReference>
<dbReference type="FunFam" id="3.30.420.40:FF:000131">
    <property type="entry name" value="Actin, alpha skeletal muscle"/>
    <property type="match status" value="1"/>
</dbReference>
<dbReference type="FunFam" id="3.30.420.40:FF:000291">
    <property type="entry name" value="Actin, alpha skeletal muscle"/>
    <property type="match status" value="1"/>
</dbReference>
<dbReference type="FunFam" id="3.90.640.10:FF:000047">
    <property type="entry name" value="Actin, alpha skeletal muscle"/>
    <property type="match status" value="1"/>
</dbReference>
<dbReference type="FunFam" id="3.30.420.40:FF:000058">
    <property type="entry name" value="Putative actin-related protein 5"/>
    <property type="match status" value="1"/>
</dbReference>
<dbReference type="Gene3D" id="3.30.420.40">
    <property type="match status" value="2"/>
</dbReference>
<dbReference type="Gene3D" id="3.90.640.10">
    <property type="entry name" value="Actin, Chain A, domain 4"/>
    <property type="match status" value="1"/>
</dbReference>
<dbReference type="InterPro" id="IPR004000">
    <property type="entry name" value="Actin"/>
</dbReference>
<dbReference type="InterPro" id="IPR020902">
    <property type="entry name" value="Actin/actin-like_CS"/>
</dbReference>
<dbReference type="InterPro" id="IPR004001">
    <property type="entry name" value="Actin_CS"/>
</dbReference>
<dbReference type="InterPro" id="IPR043129">
    <property type="entry name" value="ATPase_NBD"/>
</dbReference>
<dbReference type="PANTHER" id="PTHR11937">
    <property type="entry name" value="ACTIN"/>
    <property type="match status" value="1"/>
</dbReference>
<dbReference type="Pfam" id="PF00022">
    <property type="entry name" value="Actin"/>
    <property type="match status" value="1"/>
</dbReference>
<dbReference type="PRINTS" id="PR00190">
    <property type="entry name" value="ACTIN"/>
</dbReference>
<dbReference type="SMART" id="SM00268">
    <property type="entry name" value="ACTIN"/>
    <property type="match status" value="1"/>
</dbReference>
<dbReference type="SUPFAM" id="SSF53067">
    <property type="entry name" value="Actin-like ATPase domain"/>
    <property type="match status" value="2"/>
</dbReference>
<dbReference type="PROSITE" id="PS00406">
    <property type="entry name" value="ACTINS_1"/>
    <property type="match status" value="1"/>
</dbReference>
<dbReference type="PROSITE" id="PS00432">
    <property type="entry name" value="ACTINS_2"/>
    <property type="match status" value="1"/>
</dbReference>
<dbReference type="PROSITE" id="PS01132">
    <property type="entry name" value="ACTINS_ACT_LIKE"/>
    <property type="match status" value="1"/>
</dbReference>
<protein>
    <recommendedName>
        <fullName>Actin, adductor muscle</fullName>
        <ecNumber evidence="2">3.6.4.-</ecNumber>
    </recommendedName>
</protein>
<sequence>MCDDEVAALVVDNGSGMCKAGFAGDDAPRAVFPSIVGRPRHQGVMVGMGQKDSYVGDEAQSKRGILTLKYPIEHGIVTNWDDMEKIWHHTFYNELRVAPEEHPVLLTEAPLNPKANREKMTQIMFETFNAPAMYVAIQAVLSLYASGRTTGIVLDSGDGVTHTVPIYEGYALPHAILRLDLAGRDLTDYLMKILTERGYSFTTTAEREIVRDIKEKLCYVALDFENEMATAASSSSLEKSYELPDGQVITIGNERFRCPESLFQPSFLGMESAGIHETTYNSIMKCDVDIRKDLYANTVLSGGTTMFPGIADRMQKEITALAPSTMKIKIIAPPERKYSVWIGGSILASLSTFQQMWISKQEYDESGPSIVHRKCF</sequence>